<name>XERC_RICPR</name>
<reference key="1">
    <citation type="journal article" date="1998" name="Nature">
        <title>The genome sequence of Rickettsia prowazekii and the origin of mitochondria.</title>
        <authorList>
            <person name="Andersson S.G.E."/>
            <person name="Zomorodipour A."/>
            <person name="Andersson J.O."/>
            <person name="Sicheritz-Ponten T."/>
            <person name="Alsmark U.C.M."/>
            <person name="Podowski R.M."/>
            <person name="Naeslund A.K."/>
            <person name="Eriksson A.-S."/>
            <person name="Winkler H.H."/>
            <person name="Kurland C.G."/>
        </authorList>
    </citation>
    <scope>NUCLEOTIDE SEQUENCE [LARGE SCALE GENOMIC DNA]</scope>
    <source>
        <strain>Madrid E</strain>
    </source>
</reference>
<comment type="function">
    <text evidence="1">Site-specific tyrosine recombinase, which acts by catalyzing the cutting and rejoining of the recombining DNA molecules. The XerC-XerD complex is essential to convert dimers of the bacterial chromosome into monomers to permit their segregation at cell division. It also contributes to the segregational stability of plasmids (By similarity).</text>
</comment>
<comment type="subunit">
    <text evidence="1">Forms a cyclic heterotetrameric complex composed of two molecules of XerC and two molecules of XerD.</text>
</comment>
<comment type="subcellular location">
    <subcellularLocation>
        <location evidence="1">Cytoplasm</location>
    </subcellularLocation>
</comment>
<comment type="similarity">
    <text evidence="4">Belongs to the 'phage' integrase family. XerC subfamily.</text>
</comment>
<accession>Q9ZCE0</accession>
<dbReference type="EMBL" id="AJ235273">
    <property type="protein sequence ID" value="CAA15242.1"/>
    <property type="molecule type" value="Genomic_DNA"/>
</dbReference>
<dbReference type="PIR" id="B71643">
    <property type="entry name" value="B71643"/>
</dbReference>
<dbReference type="RefSeq" id="NP_221166.1">
    <property type="nucleotide sequence ID" value="NC_000963.1"/>
</dbReference>
<dbReference type="RefSeq" id="WP_004596870.1">
    <property type="nucleotide sequence ID" value="NC_000963.1"/>
</dbReference>
<dbReference type="SMR" id="Q9ZCE0"/>
<dbReference type="STRING" id="272947.gene:17555886"/>
<dbReference type="EnsemblBacteria" id="CAA15242">
    <property type="protein sequence ID" value="CAA15242"/>
    <property type="gene ID" value="CAA15242"/>
</dbReference>
<dbReference type="KEGG" id="rpr:RP817"/>
<dbReference type="PATRIC" id="fig|272947.5.peg.852"/>
<dbReference type="eggNOG" id="COG4974">
    <property type="taxonomic scope" value="Bacteria"/>
</dbReference>
<dbReference type="HOGENOM" id="CLU_027562_9_0_5"/>
<dbReference type="OrthoDB" id="9801717at2"/>
<dbReference type="Proteomes" id="UP000002480">
    <property type="component" value="Chromosome"/>
</dbReference>
<dbReference type="GO" id="GO:0005737">
    <property type="term" value="C:cytoplasm"/>
    <property type="evidence" value="ECO:0007669"/>
    <property type="project" value="UniProtKB-SubCell"/>
</dbReference>
<dbReference type="GO" id="GO:0003677">
    <property type="term" value="F:DNA binding"/>
    <property type="evidence" value="ECO:0007669"/>
    <property type="project" value="UniProtKB-KW"/>
</dbReference>
<dbReference type="GO" id="GO:0009037">
    <property type="term" value="F:tyrosine-based site-specific recombinase activity"/>
    <property type="evidence" value="ECO:0007669"/>
    <property type="project" value="UniProtKB-UniRule"/>
</dbReference>
<dbReference type="GO" id="GO:0051301">
    <property type="term" value="P:cell division"/>
    <property type="evidence" value="ECO:0007669"/>
    <property type="project" value="UniProtKB-KW"/>
</dbReference>
<dbReference type="GO" id="GO:0007059">
    <property type="term" value="P:chromosome segregation"/>
    <property type="evidence" value="ECO:0007669"/>
    <property type="project" value="UniProtKB-UniRule"/>
</dbReference>
<dbReference type="GO" id="GO:0006313">
    <property type="term" value="P:DNA transposition"/>
    <property type="evidence" value="ECO:0007669"/>
    <property type="project" value="UniProtKB-UniRule"/>
</dbReference>
<dbReference type="Gene3D" id="1.10.150.130">
    <property type="match status" value="1"/>
</dbReference>
<dbReference type="Gene3D" id="1.10.443.10">
    <property type="entry name" value="Intergrase catalytic core"/>
    <property type="match status" value="1"/>
</dbReference>
<dbReference type="HAMAP" id="MF_01808">
    <property type="entry name" value="Recomb_XerC_XerD"/>
    <property type="match status" value="1"/>
</dbReference>
<dbReference type="InterPro" id="IPR044068">
    <property type="entry name" value="CB"/>
</dbReference>
<dbReference type="InterPro" id="IPR011010">
    <property type="entry name" value="DNA_brk_join_enz"/>
</dbReference>
<dbReference type="InterPro" id="IPR013762">
    <property type="entry name" value="Integrase-like_cat_sf"/>
</dbReference>
<dbReference type="InterPro" id="IPR002104">
    <property type="entry name" value="Integrase_catalytic"/>
</dbReference>
<dbReference type="InterPro" id="IPR010998">
    <property type="entry name" value="Integrase_recombinase_N"/>
</dbReference>
<dbReference type="InterPro" id="IPR004107">
    <property type="entry name" value="Integrase_SAM-like_N"/>
</dbReference>
<dbReference type="InterPro" id="IPR023009">
    <property type="entry name" value="Tyrosine_recombinase_XerC/XerD"/>
</dbReference>
<dbReference type="InterPro" id="IPR050090">
    <property type="entry name" value="Tyrosine_recombinase_XerCD"/>
</dbReference>
<dbReference type="PANTHER" id="PTHR30349">
    <property type="entry name" value="PHAGE INTEGRASE-RELATED"/>
    <property type="match status" value="1"/>
</dbReference>
<dbReference type="PANTHER" id="PTHR30349:SF90">
    <property type="entry name" value="TYROSINE RECOMBINASE XERD"/>
    <property type="match status" value="1"/>
</dbReference>
<dbReference type="Pfam" id="PF02899">
    <property type="entry name" value="Phage_int_SAM_1"/>
    <property type="match status" value="1"/>
</dbReference>
<dbReference type="Pfam" id="PF00589">
    <property type="entry name" value="Phage_integrase"/>
    <property type="match status" value="1"/>
</dbReference>
<dbReference type="SUPFAM" id="SSF56349">
    <property type="entry name" value="DNA breaking-rejoining enzymes"/>
    <property type="match status" value="1"/>
</dbReference>
<dbReference type="PROSITE" id="PS51900">
    <property type="entry name" value="CB"/>
    <property type="match status" value="1"/>
</dbReference>
<dbReference type="PROSITE" id="PS51898">
    <property type="entry name" value="TYR_RECOMBINASE"/>
    <property type="match status" value="1"/>
</dbReference>
<keyword id="KW-0131">Cell cycle</keyword>
<keyword id="KW-0132">Cell division</keyword>
<keyword id="KW-0159">Chromosome partition</keyword>
<keyword id="KW-0963">Cytoplasm</keyword>
<keyword id="KW-0229">DNA integration</keyword>
<keyword id="KW-0233">DNA recombination</keyword>
<keyword id="KW-0238">DNA-binding</keyword>
<keyword id="KW-1185">Reference proteome</keyword>
<organism>
    <name type="scientific">Rickettsia prowazekii (strain Madrid E)</name>
    <dbReference type="NCBI Taxonomy" id="272947"/>
    <lineage>
        <taxon>Bacteria</taxon>
        <taxon>Pseudomonadati</taxon>
        <taxon>Pseudomonadota</taxon>
        <taxon>Alphaproteobacteria</taxon>
        <taxon>Rickettsiales</taxon>
        <taxon>Rickettsiaceae</taxon>
        <taxon>Rickettsieae</taxon>
        <taxon>Rickettsia</taxon>
        <taxon>typhus group</taxon>
    </lineage>
</organism>
<evidence type="ECO:0000250" key="1"/>
<evidence type="ECO:0000255" key="2">
    <source>
        <dbReference type="PROSITE-ProRule" id="PRU01246"/>
    </source>
</evidence>
<evidence type="ECO:0000255" key="3">
    <source>
        <dbReference type="PROSITE-ProRule" id="PRU01248"/>
    </source>
</evidence>
<evidence type="ECO:0000305" key="4"/>
<protein>
    <recommendedName>
        <fullName>Tyrosine recombinase XerC</fullName>
    </recommendedName>
</protein>
<sequence length="305" mass="35532">MLDISIQELIKQWQKYLILQKNYSNNTVIAYNNDLKHFLEFMNYYNSELVTLNHIKTADIRLIRSWLAKRKCENFTASSIARGLSTVKNFYKFLEKTLLLNNHIIFSIKSPKKAKLLPKGLSVDDVLISLEHIEEYGNVKWVELRNKALIVLIYAAGLRISEALSITKLHLQNLEFIKIIGKGSKERIIPWLPLTKNLITKYLEILPYKLDENEPIFRGRQGKKLQPSVFNRELIKLKRIYGLPEYLTAHSFRHSFASHLLEYGADLRSIQELLGHKSLSTTQKYTQTSIKHLEAVYNTAYPIKK</sequence>
<gene>
    <name type="primary">xerC</name>
    <name type="ordered locus">RP817</name>
</gene>
<feature type="chain" id="PRO_0000095323" description="Tyrosine recombinase XerC">
    <location>
        <begin position="1"/>
        <end position="305"/>
    </location>
</feature>
<feature type="domain" description="Core-binding (CB)" evidence="3">
    <location>
        <begin position="4"/>
        <end position="95"/>
    </location>
</feature>
<feature type="domain" description="Tyr recombinase" evidence="2">
    <location>
        <begin position="116"/>
        <end position="298"/>
    </location>
</feature>
<feature type="active site" evidence="2">
    <location>
        <position position="159"/>
    </location>
</feature>
<feature type="active site" evidence="2">
    <location>
        <position position="182"/>
    </location>
</feature>
<feature type="active site" evidence="2">
    <location>
        <position position="250"/>
    </location>
</feature>
<feature type="active site" evidence="2">
    <location>
        <position position="253"/>
    </location>
</feature>
<feature type="active site" evidence="2">
    <location>
        <position position="276"/>
    </location>
</feature>
<feature type="active site" description="O-(3'-phospho-DNA)-tyrosine intermediate" evidence="2">
    <location>
        <position position="285"/>
    </location>
</feature>
<proteinExistence type="inferred from homology"/>